<protein>
    <recommendedName>
        <fullName evidence="1">ATP synthase subunit b</fullName>
    </recommendedName>
    <alternativeName>
        <fullName evidence="1">ATP synthase F(0) sector subunit b</fullName>
    </alternativeName>
    <alternativeName>
        <fullName evidence="1">ATPase subunit I</fullName>
    </alternativeName>
    <alternativeName>
        <fullName evidence="1">F-type ATPase subunit b</fullName>
        <shortName evidence="1">F-ATPase subunit b</shortName>
    </alternativeName>
</protein>
<proteinExistence type="inferred from homology"/>
<reference key="1">
    <citation type="submission" date="2007-03" db="EMBL/GenBank/DDBJ databases">
        <title>Complete sequence of Desulfotomaculum reducens MI-1.</title>
        <authorList>
            <consortium name="US DOE Joint Genome Institute"/>
            <person name="Copeland A."/>
            <person name="Lucas S."/>
            <person name="Lapidus A."/>
            <person name="Barry K."/>
            <person name="Detter J.C."/>
            <person name="Glavina del Rio T."/>
            <person name="Hammon N."/>
            <person name="Israni S."/>
            <person name="Dalin E."/>
            <person name="Tice H."/>
            <person name="Pitluck S."/>
            <person name="Sims D."/>
            <person name="Brettin T."/>
            <person name="Bruce D."/>
            <person name="Han C."/>
            <person name="Tapia R."/>
            <person name="Schmutz J."/>
            <person name="Larimer F."/>
            <person name="Land M."/>
            <person name="Hauser L."/>
            <person name="Kyrpides N."/>
            <person name="Kim E."/>
            <person name="Tebo B.M."/>
            <person name="Richardson P."/>
        </authorList>
    </citation>
    <scope>NUCLEOTIDE SEQUENCE [LARGE SCALE GENOMIC DNA]</scope>
    <source>
        <strain>ATCC BAA-1160 / DSM 100696 / MI-1</strain>
    </source>
</reference>
<dbReference type="EMBL" id="CP000612">
    <property type="protein sequence ID" value="ABO51656.1"/>
    <property type="molecule type" value="Genomic_DNA"/>
</dbReference>
<dbReference type="SMR" id="A4J9A3"/>
<dbReference type="STRING" id="349161.Dred_3154"/>
<dbReference type="KEGG" id="drm:Dred_3154"/>
<dbReference type="eggNOG" id="COG0711">
    <property type="taxonomic scope" value="Bacteria"/>
</dbReference>
<dbReference type="HOGENOM" id="CLU_079215_4_2_9"/>
<dbReference type="Proteomes" id="UP000001556">
    <property type="component" value="Chromosome"/>
</dbReference>
<dbReference type="GO" id="GO:0005886">
    <property type="term" value="C:plasma membrane"/>
    <property type="evidence" value="ECO:0007669"/>
    <property type="project" value="UniProtKB-SubCell"/>
</dbReference>
<dbReference type="GO" id="GO:0045259">
    <property type="term" value="C:proton-transporting ATP synthase complex"/>
    <property type="evidence" value="ECO:0007669"/>
    <property type="project" value="UniProtKB-KW"/>
</dbReference>
<dbReference type="GO" id="GO:0046933">
    <property type="term" value="F:proton-transporting ATP synthase activity, rotational mechanism"/>
    <property type="evidence" value="ECO:0007669"/>
    <property type="project" value="UniProtKB-UniRule"/>
</dbReference>
<dbReference type="GO" id="GO:0046961">
    <property type="term" value="F:proton-transporting ATPase activity, rotational mechanism"/>
    <property type="evidence" value="ECO:0007669"/>
    <property type="project" value="TreeGrafter"/>
</dbReference>
<dbReference type="CDD" id="cd06503">
    <property type="entry name" value="ATP-synt_Fo_b"/>
    <property type="match status" value="1"/>
</dbReference>
<dbReference type="HAMAP" id="MF_01398">
    <property type="entry name" value="ATP_synth_b_bprime"/>
    <property type="match status" value="1"/>
</dbReference>
<dbReference type="InterPro" id="IPR028987">
    <property type="entry name" value="ATP_synth_B-like_membr_sf"/>
</dbReference>
<dbReference type="InterPro" id="IPR002146">
    <property type="entry name" value="ATP_synth_b/b'su_bac/chlpt"/>
</dbReference>
<dbReference type="InterPro" id="IPR005864">
    <property type="entry name" value="ATP_synth_F0_bsu_bac"/>
</dbReference>
<dbReference type="InterPro" id="IPR050059">
    <property type="entry name" value="ATP_synthase_B_chain"/>
</dbReference>
<dbReference type="NCBIfam" id="TIGR01144">
    <property type="entry name" value="ATP_synt_b"/>
    <property type="match status" value="1"/>
</dbReference>
<dbReference type="PANTHER" id="PTHR33445:SF1">
    <property type="entry name" value="ATP SYNTHASE SUBUNIT B"/>
    <property type="match status" value="1"/>
</dbReference>
<dbReference type="PANTHER" id="PTHR33445">
    <property type="entry name" value="ATP SYNTHASE SUBUNIT B', CHLOROPLASTIC"/>
    <property type="match status" value="1"/>
</dbReference>
<dbReference type="Pfam" id="PF00430">
    <property type="entry name" value="ATP-synt_B"/>
    <property type="match status" value="1"/>
</dbReference>
<dbReference type="SUPFAM" id="SSF81573">
    <property type="entry name" value="F1F0 ATP synthase subunit B, membrane domain"/>
    <property type="match status" value="1"/>
</dbReference>
<sequence length="189" mass="20784">MAGLTQSPSPPAPSLLSAQTEGGEFVESLGFNGTLLAQMFNFLVLLILLRAVAYKPFMNMLEKRRELIEGSIAAAEEDKKQAEQLRATLQADLQRSREQATEMMARATKNAEEQAQQIIEAAKAEAARVKDSALSEIQREKERAVAELRDQVATLSILVAGKIIDQKLNDDVQKDLVNKFVKEAGDLPC</sequence>
<keyword id="KW-0066">ATP synthesis</keyword>
<keyword id="KW-1003">Cell membrane</keyword>
<keyword id="KW-0138">CF(0)</keyword>
<keyword id="KW-0375">Hydrogen ion transport</keyword>
<keyword id="KW-0406">Ion transport</keyword>
<keyword id="KW-0472">Membrane</keyword>
<keyword id="KW-1185">Reference proteome</keyword>
<keyword id="KW-0812">Transmembrane</keyword>
<keyword id="KW-1133">Transmembrane helix</keyword>
<keyword id="KW-0813">Transport</keyword>
<gene>
    <name evidence="1" type="primary">atpF</name>
    <name type="ordered locus">Dred_3154</name>
</gene>
<evidence type="ECO:0000255" key="1">
    <source>
        <dbReference type="HAMAP-Rule" id="MF_01398"/>
    </source>
</evidence>
<comment type="function">
    <text evidence="1">F(1)F(0) ATP synthase produces ATP from ADP in the presence of a proton or sodium gradient. F-type ATPases consist of two structural domains, F(1) containing the extramembraneous catalytic core and F(0) containing the membrane proton channel, linked together by a central stalk and a peripheral stalk. During catalysis, ATP synthesis in the catalytic domain of F(1) is coupled via a rotary mechanism of the central stalk subunits to proton translocation.</text>
</comment>
<comment type="function">
    <text evidence="1">Component of the F(0) channel, it forms part of the peripheral stalk, linking F(1) to F(0).</text>
</comment>
<comment type="subunit">
    <text evidence="1">F-type ATPases have 2 components, F(1) - the catalytic core - and F(0) - the membrane proton channel. F(1) has five subunits: alpha(3), beta(3), gamma(1), delta(1), epsilon(1). F(0) has three main subunits: a(1), b(2) and c(10-14). The alpha and beta chains form an alternating ring which encloses part of the gamma chain. F(1) is attached to F(0) by a central stalk formed by the gamma and epsilon chains, while a peripheral stalk is formed by the delta and b chains.</text>
</comment>
<comment type="subcellular location">
    <subcellularLocation>
        <location evidence="1">Cell membrane</location>
        <topology evidence="1">Single-pass membrane protein</topology>
    </subcellularLocation>
</comment>
<comment type="similarity">
    <text evidence="1">Belongs to the ATPase B chain family.</text>
</comment>
<organism>
    <name type="scientific">Desulforamulus reducens (strain ATCC BAA-1160 / DSM 100696 / MI-1)</name>
    <name type="common">Desulfotomaculum reducens</name>
    <dbReference type="NCBI Taxonomy" id="349161"/>
    <lineage>
        <taxon>Bacteria</taxon>
        <taxon>Bacillati</taxon>
        <taxon>Bacillota</taxon>
        <taxon>Clostridia</taxon>
        <taxon>Eubacteriales</taxon>
        <taxon>Peptococcaceae</taxon>
        <taxon>Desulforamulus</taxon>
    </lineage>
</organism>
<accession>A4J9A3</accession>
<feature type="chain" id="PRO_0000368461" description="ATP synthase subunit b">
    <location>
        <begin position="1"/>
        <end position="189"/>
    </location>
</feature>
<feature type="transmembrane region" description="Helical" evidence="1">
    <location>
        <begin position="35"/>
        <end position="54"/>
    </location>
</feature>
<name>ATPF_DESRM</name>